<comment type="function">
    <text evidence="1">RuBisCO catalyzes two reactions: the carboxylation of D-ribulose 1,5-bisphosphate, the primary event in carbon dioxide fixation, as well as the oxidative fragmentation of the pentose substrate in the photorespiration process. Both reactions occur simultaneously and in competition at the same active site.</text>
</comment>
<comment type="catalytic activity">
    <reaction evidence="1">
        <text>2 (2R)-3-phosphoglycerate + 2 H(+) = D-ribulose 1,5-bisphosphate + CO2 + H2O</text>
        <dbReference type="Rhea" id="RHEA:23124"/>
        <dbReference type="ChEBI" id="CHEBI:15377"/>
        <dbReference type="ChEBI" id="CHEBI:15378"/>
        <dbReference type="ChEBI" id="CHEBI:16526"/>
        <dbReference type="ChEBI" id="CHEBI:57870"/>
        <dbReference type="ChEBI" id="CHEBI:58272"/>
        <dbReference type="EC" id="4.1.1.39"/>
    </reaction>
</comment>
<comment type="catalytic activity">
    <reaction evidence="1">
        <text>D-ribulose 1,5-bisphosphate + O2 = 2-phosphoglycolate + (2R)-3-phosphoglycerate + 2 H(+)</text>
        <dbReference type="Rhea" id="RHEA:36631"/>
        <dbReference type="ChEBI" id="CHEBI:15378"/>
        <dbReference type="ChEBI" id="CHEBI:15379"/>
        <dbReference type="ChEBI" id="CHEBI:57870"/>
        <dbReference type="ChEBI" id="CHEBI:58033"/>
        <dbReference type="ChEBI" id="CHEBI:58272"/>
    </reaction>
</comment>
<comment type="cofactor">
    <cofactor evidence="1">
        <name>Mg(2+)</name>
        <dbReference type="ChEBI" id="CHEBI:18420"/>
    </cofactor>
    <text evidence="1">Binds 1 Mg(2+) ion per subunit.</text>
</comment>
<comment type="subunit">
    <text evidence="1">Heterohexadecamer of 8 large chains and 8 small chains; disulfide-linked. The disulfide link is formed within the large subunit homodimers.</text>
</comment>
<comment type="subcellular location">
    <subcellularLocation>
        <location>Plastid</location>
        <location>Chloroplast</location>
    </subcellularLocation>
</comment>
<comment type="PTM">
    <text evidence="1">The disulfide bond which can form in the large chain dimeric partners within the hexadecamer appears to be associated with oxidative stress and protein turnover.</text>
</comment>
<comment type="miscellaneous">
    <text evidence="1">The basic functional RuBisCO is composed of a large chain homodimer in a 'head-to-tail' conformation. In form I RuBisCO this homodimer is arranged in a barrel-like tetramer with the small subunits forming a tetrameric 'cap' on each end of the 'barrel'.</text>
</comment>
<comment type="similarity">
    <text evidence="1">Belongs to the RuBisCO large chain family. Type I subfamily.</text>
</comment>
<protein>
    <recommendedName>
        <fullName evidence="1">Ribulose bisphosphate carboxylase large chain</fullName>
        <shortName evidence="1">RuBisCO large subunit</shortName>
        <ecNumber evidence="1">4.1.1.39</ecNumber>
    </recommendedName>
</protein>
<feature type="chain" id="PRO_0000062421" description="Ribulose bisphosphate carboxylase large chain">
    <location>
        <begin position="1" status="less than"/>
        <end position="465"/>
    </location>
</feature>
<feature type="active site" description="Proton acceptor" evidence="1">
    <location>
        <position position="165"/>
    </location>
</feature>
<feature type="active site" description="Proton acceptor" evidence="1">
    <location>
        <position position="284"/>
    </location>
</feature>
<feature type="binding site" description="in homodimeric partner" evidence="1">
    <location>
        <position position="113"/>
    </location>
    <ligand>
        <name>substrate</name>
    </ligand>
</feature>
<feature type="binding site" evidence="1">
    <location>
        <position position="163"/>
    </location>
    <ligand>
        <name>substrate</name>
    </ligand>
</feature>
<feature type="binding site" evidence="1">
    <location>
        <position position="167"/>
    </location>
    <ligand>
        <name>substrate</name>
    </ligand>
</feature>
<feature type="binding site" description="via carbamate group" evidence="1">
    <location>
        <position position="191"/>
    </location>
    <ligand>
        <name>Mg(2+)</name>
        <dbReference type="ChEBI" id="CHEBI:18420"/>
    </ligand>
</feature>
<feature type="binding site" evidence="1">
    <location>
        <position position="193"/>
    </location>
    <ligand>
        <name>Mg(2+)</name>
        <dbReference type="ChEBI" id="CHEBI:18420"/>
    </ligand>
</feature>
<feature type="binding site" evidence="1">
    <location>
        <position position="194"/>
    </location>
    <ligand>
        <name>Mg(2+)</name>
        <dbReference type="ChEBI" id="CHEBI:18420"/>
    </ligand>
</feature>
<feature type="binding site" evidence="1">
    <location>
        <position position="285"/>
    </location>
    <ligand>
        <name>substrate</name>
    </ligand>
</feature>
<feature type="binding site" evidence="1">
    <location>
        <position position="317"/>
    </location>
    <ligand>
        <name>substrate</name>
    </ligand>
</feature>
<feature type="binding site" evidence="1">
    <location>
        <position position="369"/>
    </location>
    <ligand>
        <name>substrate</name>
    </ligand>
</feature>
<feature type="site" description="Transition state stabilizer" evidence="1">
    <location>
        <position position="324"/>
    </location>
</feature>
<feature type="modified residue" description="N6,N6,N6-trimethyllysine" evidence="1">
    <location>
        <position position="4"/>
    </location>
</feature>
<feature type="modified residue" description="N6-carboxylysine" evidence="1">
    <location>
        <position position="191"/>
    </location>
</feature>
<feature type="disulfide bond" description="Interchain; in linked form" evidence="1">
    <location>
        <position position="237"/>
    </location>
</feature>
<feature type="non-terminal residue">
    <location>
        <position position="1"/>
    </location>
</feature>
<proteinExistence type="inferred from homology"/>
<gene>
    <name evidence="1" type="primary">rbcL</name>
</gene>
<evidence type="ECO:0000255" key="1">
    <source>
        <dbReference type="HAMAP-Rule" id="MF_01338"/>
    </source>
</evidence>
<sequence>VGFKAGVKEYKLTYHTPEYETKDTDILAAFRVTPQPGVPPEEAGAAVAAESSTGTWTTVWTDGLTSLDRYKGRCYHIEPVPGEESQFIAYVAYPLDLFEEGSVTNMFTSIVGXVFGFKALRALRLEDLRIPPAYVKTFQGPPHGIQVERDKLNKYGRPLLGCTIKPKLGLSAKNYGRAVYECLRGGLDFTKDDENVNSQPFMRWRDRFLFCAEAIYKAQAETGEIKGHYLNATAGTCEEMIKRAVFARELGVPIVMHDYLTGGFTANTSLAHYCRDNGLLLHIHRAMHAVIDRQKNHGMHFRVLAKALRMSGGDHVHSGTVVGKLEGEREITLGFVDLLRDDFIEKDRSRGIFFTQDWVSLPGVLPVASGGIHVWHXPALTEIFGDDSVLQFGGGTLGHXWGNAPGAVANRVALEACVQARNEGXDLAREGNEIIREASKWSPELAAACEIWKEIKFEFEAMDTL</sequence>
<name>RBL_COROB</name>
<dbReference type="EC" id="4.1.1.39" evidence="1"/>
<dbReference type="EMBL" id="L11217">
    <property type="protein sequence ID" value="AAA84166.2"/>
    <property type="molecule type" value="Genomic_DNA"/>
</dbReference>
<dbReference type="GO" id="GO:0009507">
    <property type="term" value="C:chloroplast"/>
    <property type="evidence" value="ECO:0007669"/>
    <property type="project" value="UniProtKB-SubCell"/>
</dbReference>
<dbReference type="GO" id="GO:0000287">
    <property type="term" value="F:magnesium ion binding"/>
    <property type="evidence" value="ECO:0007669"/>
    <property type="project" value="InterPro"/>
</dbReference>
<dbReference type="GO" id="GO:0004497">
    <property type="term" value="F:monooxygenase activity"/>
    <property type="evidence" value="ECO:0007669"/>
    <property type="project" value="UniProtKB-KW"/>
</dbReference>
<dbReference type="GO" id="GO:0016984">
    <property type="term" value="F:ribulose-bisphosphate carboxylase activity"/>
    <property type="evidence" value="ECO:0007669"/>
    <property type="project" value="UniProtKB-EC"/>
</dbReference>
<dbReference type="GO" id="GO:0009853">
    <property type="term" value="P:photorespiration"/>
    <property type="evidence" value="ECO:0007669"/>
    <property type="project" value="UniProtKB-KW"/>
</dbReference>
<dbReference type="GO" id="GO:0019253">
    <property type="term" value="P:reductive pentose-phosphate cycle"/>
    <property type="evidence" value="ECO:0007669"/>
    <property type="project" value="UniProtKB-KW"/>
</dbReference>
<dbReference type="CDD" id="cd08212">
    <property type="entry name" value="RuBisCO_large_I"/>
    <property type="match status" value="1"/>
</dbReference>
<dbReference type="FunFam" id="3.20.20.110:FF:000001">
    <property type="entry name" value="Ribulose bisphosphate carboxylase large chain"/>
    <property type="match status" value="1"/>
</dbReference>
<dbReference type="FunFam" id="3.30.70.150:FF:000001">
    <property type="entry name" value="Ribulose bisphosphate carboxylase large chain"/>
    <property type="match status" value="1"/>
</dbReference>
<dbReference type="Gene3D" id="3.20.20.110">
    <property type="entry name" value="Ribulose bisphosphate carboxylase, large subunit, C-terminal domain"/>
    <property type="match status" value="1"/>
</dbReference>
<dbReference type="Gene3D" id="3.30.70.150">
    <property type="entry name" value="RuBisCO large subunit, N-terminal domain"/>
    <property type="match status" value="1"/>
</dbReference>
<dbReference type="HAMAP" id="MF_01338">
    <property type="entry name" value="RuBisCO_L_type1"/>
    <property type="match status" value="1"/>
</dbReference>
<dbReference type="InterPro" id="IPR033966">
    <property type="entry name" value="RuBisCO"/>
</dbReference>
<dbReference type="InterPro" id="IPR020878">
    <property type="entry name" value="RuBisCo_large_chain_AS"/>
</dbReference>
<dbReference type="InterPro" id="IPR000685">
    <property type="entry name" value="RuBisCO_lsu_C"/>
</dbReference>
<dbReference type="InterPro" id="IPR036376">
    <property type="entry name" value="RuBisCO_lsu_C_sf"/>
</dbReference>
<dbReference type="InterPro" id="IPR017443">
    <property type="entry name" value="RuBisCO_lsu_fd_N"/>
</dbReference>
<dbReference type="InterPro" id="IPR036422">
    <property type="entry name" value="RuBisCO_lsu_N_sf"/>
</dbReference>
<dbReference type="InterPro" id="IPR020888">
    <property type="entry name" value="RuBisCO_lsuI"/>
</dbReference>
<dbReference type="NCBIfam" id="NF003252">
    <property type="entry name" value="PRK04208.1"/>
    <property type="match status" value="1"/>
</dbReference>
<dbReference type="PANTHER" id="PTHR42704">
    <property type="entry name" value="RIBULOSE BISPHOSPHATE CARBOXYLASE"/>
    <property type="match status" value="1"/>
</dbReference>
<dbReference type="PANTHER" id="PTHR42704:SF16">
    <property type="entry name" value="RIBULOSE BISPHOSPHATE CARBOXYLASE LARGE CHAIN"/>
    <property type="match status" value="1"/>
</dbReference>
<dbReference type="Pfam" id="PF00016">
    <property type="entry name" value="RuBisCO_large"/>
    <property type="match status" value="1"/>
</dbReference>
<dbReference type="Pfam" id="PF02788">
    <property type="entry name" value="RuBisCO_large_N"/>
    <property type="match status" value="1"/>
</dbReference>
<dbReference type="SFLD" id="SFLDG01052">
    <property type="entry name" value="RuBisCO"/>
    <property type="match status" value="1"/>
</dbReference>
<dbReference type="SFLD" id="SFLDS00014">
    <property type="entry name" value="RuBisCO"/>
    <property type="match status" value="1"/>
</dbReference>
<dbReference type="SFLD" id="SFLDG00301">
    <property type="entry name" value="RuBisCO-like_proteins"/>
    <property type="match status" value="1"/>
</dbReference>
<dbReference type="SUPFAM" id="SSF51649">
    <property type="entry name" value="RuBisCo, C-terminal domain"/>
    <property type="match status" value="1"/>
</dbReference>
<dbReference type="SUPFAM" id="SSF54966">
    <property type="entry name" value="RuBisCO, large subunit, small (N-terminal) domain"/>
    <property type="match status" value="1"/>
</dbReference>
<dbReference type="PROSITE" id="PS00157">
    <property type="entry name" value="RUBISCO_LARGE"/>
    <property type="match status" value="1"/>
</dbReference>
<accession>Q32040</accession>
<keyword id="KW-0113">Calvin cycle</keyword>
<keyword id="KW-0120">Carbon dioxide fixation</keyword>
<keyword id="KW-0150">Chloroplast</keyword>
<keyword id="KW-1015">Disulfide bond</keyword>
<keyword id="KW-0456">Lyase</keyword>
<keyword id="KW-0460">Magnesium</keyword>
<keyword id="KW-0479">Metal-binding</keyword>
<keyword id="KW-0488">Methylation</keyword>
<keyword id="KW-0503">Monooxygenase</keyword>
<keyword id="KW-0560">Oxidoreductase</keyword>
<keyword id="KW-0601">Photorespiration</keyword>
<keyword id="KW-0602">Photosynthesis</keyword>
<keyword id="KW-0934">Plastid</keyword>
<geneLocation type="chloroplast"/>
<organism>
    <name type="scientific">Cornus obliqua</name>
    <name type="common">Silky dogwood</name>
    <name type="synonym">Cornus amomum subsp. obliqua</name>
    <dbReference type="NCBI Taxonomy" id="16904"/>
    <lineage>
        <taxon>Eukaryota</taxon>
        <taxon>Viridiplantae</taxon>
        <taxon>Streptophyta</taxon>
        <taxon>Embryophyta</taxon>
        <taxon>Tracheophyta</taxon>
        <taxon>Spermatophyta</taxon>
        <taxon>Magnoliopsida</taxon>
        <taxon>eudicotyledons</taxon>
        <taxon>Gunneridae</taxon>
        <taxon>Pentapetalae</taxon>
        <taxon>asterids</taxon>
        <taxon>Cornales</taxon>
        <taxon>Cornaceae</taxon>
        <taxon>Cornus</taxon>
    </lineage>
</organism>
<reference key="1">
    <citation type="journal article" date="1993" name="Ann. Mo. Bot. Gard.">
        <title>Phylogenetic relationships of Cornus L. sensu lato and putative relatives inferred from rbcL sequence data.</title>
        <authorList>
            <person name="Xiang Q.-Y."/>
            <person name="Soltis D.E."/>
            <person name="Morgan D.R."/>
            <person name="Soltis P.S."/>
        </authorList>
        <dbReference type="AGRICOLA" id="IND93053817"/>
    </citation>
    <scope>NUCLEOTIDE SEQUENCE [GENOMIC DNA]</scope>
    <source>
        <tissue>Leaf</tissue>
    </source>
</reference>